<reference key="1">
    <citation type="journal article" date="1995" name="Eur. J. Neurosci.">
        <title>Molecular cloning, functional expression and pharmacological characterization of the human metabotropic glutamate receptor type 2.</title>
        <authorList>
            <person name="Flor P.J."/>
            <person name="Lindauer K."/>
            <person name="Puttner I."/>
            <person name="Ruegg D."/>
            <person name="Lukic S."/>
            <person name="Knopfel T."/>
            <person name="Kuhn R."/>
        </authorList>
    </citation>
    <scope>NUCLEOTIDE SEQUENCE [MRNA]</scope>
    <scope>FUNCTION</scope>
</reference>
<reference key="2">
    <citation type="submission" date="2000-06" db="EMBL/GenBank/DDBJ databases">
        <title>Structure and polymorphisms of the human metabotropic glutamate receptor type 2 (hmGluR2) gene: analysis of association with schizophrenia.</title>
        <authorList>
            <person name="Yasuyuki F."/>
            <person name="Akiko J."/>
        </authorList>
    </citation>
    <scope>NUCLEOTIDE SEQUENCE [GENOMIC DNA]</scope>
</reference>
<reference key="3">
    <citation type="submission" date="2005-04" db="EMBL/GenBank/DDBJ databases">
        <title>Complete coding sequence of human metabotropic glutamate receptor 2.</title>
        <authorList>
            <person name="Bonner T.I."/>
            <person name="Kauffman D."/>
            <person name="Nagle J.W."/>
        </authorList>
    </citation>
    <scope>NUCLEOTIDE SEQUENCE [MRNA]</scope>
    <source>
        <tissue>Brain</tissue>
    </source>
</reference>
<reference key="4">
    <citation type="submission" date="2007-12" db="EMBL/GenBank/DDBJ databases">
        <authorList>
            <person name="Kaighin V.A."/>
            <person name="Martin A.L."/>
            <person name="Aronstam R.S."/>
        </authorList>
    </citation>
    <scope>NUCLEOTIDE SEQUENCE [MRNA]</scope>
    <source>
        <tissue>Brain</tissue>
    </source>
</reference>
<reference key="5">
    <citation type="submission" date="2005-07" db="EMBL/GenBank/DDBJ databases">
        <authorList>
            <person name="Mural R.J."/>
            <person name="Istrail S."/>
            <person name="Sutton G.G."/>
            <person name="Florea L."/>
            <person name="Halpern A.L."/>
            <person name="Mobarry C.M."/>
            <person name="Lippert R."/>
            <person name="Walenz B."/>
            <person name="Shatkay H."/>
            <person name="Dew I."/>
            <person name="Miller J.R."/>
            <person name="Flanigan M.J."/>
            <person name="Edwards N.J."/>
            <person name="Bolanos R."/>
            <person name="Fasulo D."/>
            <person name="Halldorsson B.V."/>
            <person name="Hannenhalli S."/>
            <person name="Turner R."/>
            <person name="Yooseph S."/>
            <person name="Lu F."/>
            <person name="Nusskern D.R."/>
            <person name="Shue B.C."/>
            <person name="Zheng X.H."/>
            <person name="Zhong F."/>
            <person name="Delcher A.L."/>
            <person name="Huson D.H."/>
            <person name="Kravitz S.A."/>
            <person name="Mouchard L."/>
            <person name="Reinert K."/>
            <person name="Remington K.A."/>
            <person name="Clark A.G."/>
            <person name="Waterman M.S."/>
            <person name="Eichler E.E."/>
            <person name="Adams M.D."/>
            <person name="Hunkapiller M.W."/>
            <person name="Myers E.W."/>
            <person name="Venter J.C."/>
        </authorList>
    </citation>
    <scope>NUCLEOTIDE SEQUENCE [LARGE SCALE GENOMIC DNA]</scope>
</reference>
<reference key="6">
    <citation type="journal article" date="2004" name="Genome Res.">
        <title>The status, quality, and expansion of the NIH full-length cDNA project: the Mammalian Gene Collection (MGC).</title>
        <authorList>
            <consortium name="The MGC Project Team"/>
        </authorList>
    </citation>
    <scope>NUCLEOTIDE SEQUENCE [LARGE SCALE MRNA]</scope>
    <source>
        <tissue>Brain cortex</tissue>
    </source>
</reference>
<reference key="7">
    <citation type="journal article" date="2008" name="Nature">
        <title>Identification of a serotonin/glutamate receptor complex implicated in psychosis.</title>
        <authorList>
            <person name="Gonzalez-Maeso J."/>
            <person name="Ang R.L."/>
            <person name="Yuen T."/>
            <person name="Chan P."/>
            <person name="Weisstaub N.V."/>
            <person name="Lopez-Gimenez J.F."/>
            <person name="Zhou M."/>
            <person name="Okawa Y."/>
            <person name="Callado L.F."/>
            <person name="Milligan G."/>
            <person name="Gingrich J.A."/>
            <person name="Filizola M."/>
            <person name="Meana J.J."/>
            <person name="Sealfon S.C."/>
        </authorList>
    </citation>
    <scope>INTERACTION WITH HTR2A</scope>
    <scope>FUNCTION</scope>
    <scope>TISSUE SPECIFICITY</scope>
    <scope>SUBCELLULAR LOCATION</scope>
</reference>
<reference key="8">
    <citation type="journal article" date="2012" name="J. Biol. Chem.">
        <title>Identification of three residues essential for 5-hydroxytryptamine 2A-metabotropic glutamate 2 (5-HT2A.mGlu2) receptor heteromerization and its psychoactive behavioral function.</title>
        <authorList>
            <person name="Moreno J.L."/>
            <person name="Muguruza C."/>
            <person name="Umali A."/>
            <person name="Mortillo S."/>
            <person name="Holloway T."/>
            <person name="Pilar-Cuellar F."/>
            <person name="Mocci G."/>
            <person name="Seto J."/>
            <person name="Callado L.F."/>
            <person name="Neve R.L."/>
            <person name="Milligan G."/>
            <person name="Sealfon S.C."/>
            <person name="Lopez-Gimenez J.F."/>
            <person name="Meana J.J."/>
            <person name="Benson D.L."/>
            <person name="Gonzalez-Maeso J."/>
        </authorList>
    </citation>
    <scope>INTERACTION WITH HTR2A</scope>
    <scope>FUNCTION</scope>
    <scope>SUBCELLULAR LOCATION</scope>
    <scope>MUTAGENESIS OF ALA-677; ALA-681 AND ALA-685</scope>
</reference>
<reference key="9">
    <citation type="journal article" date="2012" name="Neuropharmacology">
        <title>Heterocomplex formation of 5-HT2A-mGlu2 and its relevance for cellular signaling cascades.</title>
        <authorList>
            <person name="Delille H.K."/>
            <person name="Becker J.M."/>
            <person name="Burkhardt S."/>
            <person name="Bleher B."/>
            <person name="Terstappen G.C."/>
            <person name="Schmidt M."/>
            <person name="Meyer A.H."/>
            <person name="Unger L."/>
            <person name="Marek G.J."/>
            <person name="Mezler M."/>
        </authorList>
    </citation>
    <scope>INTERACTION WITH HTR2A</scope>
    <scope>FUNCTION</scope>
    <scope>SUBCELLULAR LOCATION</scope>
</reference>
<reference key="10">
    <citation type="journal article" date="2018" name="PLoS Pathog.">
        <title>Metabotropic glutamate receptor subtype 2 is a cellular receptor for rabies virus.</title>
        <authorList>
            <person name="Wang J."/>
            <person name="Wang Z."/>
            <person name="Liu R."/>
            <person name="Shuai L."/>
            <person name="Wang X."/>
            <person name="Luo J."/>
            <person name="Wang C."/>
            <person name="Chen W."/>
            <person name="Wang X."/>
            <person name="Ge J."/>
            <person name="He X."/>
            <person name="Wen Z."/>
            <person name="Bu Z."/>
        </authorList>
    </citation>
    <scope>FUNCTION (MICROBIAL INFECTION)</scope>
    <scope>INTERACTION WITH RABV PROTEIN G (MICROBIAL INFECTION)</scope>
</reference>
<reference key="11">
    <citation type="journal article" date="2021" name="Cell Discov.">
        <title>SARS-CoV-2 uses metabotropic glutamate receptor subtype 2 as an internalization factor to infect cells.</title>
        <authorList>
            <person name="Wang J."/>
            <person name="Yang G."/>
            <person name="Wang X."/>
            <person name="Wen Z."/>
            <person name="Shuai L."/>
            <person name="Luo J."/>
            <person name="Wang C."/>
            <person name="Sun Z."/>
            <person name="Liu R."/>
            <person name="Ge J."/>
            <person name="He X."/>
            <person name="Hua R."/>
            <person name="Wang X."/>
            <person name="Yang X."/>
            <person name="Chen W."/>
            <person name="Zhong G."/>
            <person name="Bu Z."/>
        </authorList>
    </citation>
    <scope>FUNCTION (MICROBIAL INFECTION)</scope>
    <scope>INTERACTION WITH SARS-COV-2 SPIKE PROTEIN S (MICROBIAL INFECTION)</scope>
</reference>
<reference key="12">
    <citation type="journal article" date="2024" name="Nat. Microbiol.">
        <title>Influenza virus uses mGluR2 as an endocytic receptor to enter cells.</title>
        <authorList>
            <person name="Ni Z."/>
            <person name="Wang J."/>
            <person name="Yu X."/>
            <person name="Wang Y."/>
            <person name="Wang J."/>
            <person name="He X."/>
            <person name="Li C."/>
            <person name="Deng G."/>
            <person name="Shi J."/>
            <person name="Kong H."/>
            <person name="Jiang Y."/>
            <person name="Chen P."/>
            <person name="Zeng X."/>
            <person name="Tian G."/>
            <person name="Chen H."/>
            <person name="Bu Z."/>
        </authorList>
    </citation>
    <scope>FUNCTION (MICROBIAL INFECTION)</scope>
    <scope>INTERACTION WITH H5N6 PROTEIN HA (MICROBIAL INFECTION)</scope>
</reference>
<reference evidence="15 16" key="13">
    <citation type="journal article" date="2015" name="J. Med. Chem.">
        <title>Synthesis and Pharmacological Characterization of C4-(Thiotriazolyl)-substituted-2-aminobicyclo[3.1.0]hexane-2,6-dicarboxylates. Identification of (1R,2S,4R,5R,6R)-2-Amino-4-(1H-1,2,4-triazol-3-ylsulfanyl)bicyclo[3.1.0]hexane-2,6-dicarboxylic Acid (LY2812223), a Highly Potent, Functionally Selective mGlu2 Receptor Agonist.</title>
        <authorList>
            <person name="Monn J.A."/>
            <person name="Prieto L."/>
            <person name="Taboada L."/>
            <person name="Hao J."/>
            <person name="Reinhard M.R."/>
            <person name="Henry S.S."/>
            <person name="Beadle C.D."/>
            <person name="Walton L."/>
            <person name="Man T."/>
            <person name="Rudyk H."/>
            <person name="Clark B."/>
            <person name="Tupper D."/>
            <person name="Baker S.R."/>
            <person name="Lamas C."/>
            <person name="Montero C."/>
            <person name="Marcos A."/>
            <person name="Blanco J."/>
            <person name="Bures M."/>
            <person name="Clawson D.K."/>
            <person name="Atwell S."/>
            <person name="Lu F."/>
            <person name="Wang J."/>
            <person name="Russell M."/>
            <person name="Heinz B.A."/>
            <person name="Wang X."/>
            <person name="Carter J.H."/>
            <person name="Getman B.G."/>
            <person name="Catlow J.T."/>
            <person name="Swanson S."/>
            <person name="Johnson B.G."/>
            <person name="Shaw D.B."/>
            <person name="McKinzie D.L."/>
        </authorList>
    </citation>
    <scope>X-RAY CRYSTALLOGRAPHY (2.65 ANGSTROMS) OF 2-493 IN COMPLEX WITH L-GLUTAMATE</scope>
    <scope>GLYCOSYLATION AT ASN-203 AND ASN-286</scope>
    <scope>DISULFIDE BONDS</scope>
</reference>
<reference key="14">
    <citation type="journal article" date="2023" name="Cell Res.">
        <title>Structural insights into dimerization and activation of the mGlu2-mGlu3 and mGlu2-mGlu4 heterodimers.</title>
        <authorList>
            <person name="Wang X."/>
            <person name="Wang M."/>
            <person name="Xu T."/>
            <person name="Feng Y."/>
            <person name="Shao Q."/>
            <person name="Han S."/>
            <person name="Chu X."/>
            <person name="Xu Y."/>
            <person name="Lin S."/>
            <person name="Zhao Q."/>
            <person name="Wu B."/>
        </authorList>
    </citation>
    <scope>STRUCTURE BY ELECTRON MICROSCOPY (2.80 ANGSTROMS) OF 19-872</scope>
    <scope>INTERACTION WITH GRM3 AND GRM4</scope>
    <scope>FUNCTION</scope>
</reference>
<accession>Q14416</accession>
<accession>B0M0K7</accession>
<accession>Q14CU5</accession>
<accession>Q52MC6</accession>
<accession>Q9H3N6</accession>
<gene>
    <name evidence="14" type="primary">GRM2</name>
    <name type="synonym">GPRC1B</name>
    <name type="synonym">MGLUR2</name>
</gene>
<evidence type="ECO:0000250" key="1"/>
<evidence type="ECO:0000250" key="2">
    <source>
        <dbReference type="UniProtKB" id="Q14BI2"/>
    </source>
</evidence>
<evidence type="ECO:0000255" key="3"/>
<evidence type="ECO:0000269" key="4">
    <source>
    </source>
</evidence>
<evidence type="ECO:0000269" key="5">
    <source>
    </source>
</evidence>
<evidence type="ECO:0000269" key="6">
    <source>
    </source>
</evidence>
<evidence type="ECO:0000269" key="7">
    <source>
    </source>
</evidence>
<evidence type="ECO:0000269" key="8">
    <source>
    </source>
</evidence>
<evidence type="ECO:0000269" key="9">
    <source>
    </source>
</evidence>
<evidence type="ECO:0000269" key="10">
    <source>
    </source>
</evidence>
<evidence type="ECO:0000269" key="11">
    <source>
    </source>
</evidence>
<evidence type="ECO:0000269" key="12">
    <source>
    </source>
</evidence>
<evidence type="ECO:0000305" key="13"/>
<evidence type="ECO:0000312" key="14">
    <source>
        <dbReference type="HGNC" id="HGNC:4594"/>
    </source>
</evidence>
<evidence type="ECO:0007744" key="15">
    <source>
        <dbReference type="PDB" id="5CNI"/>
    </source>
</evidence>
<evidence type="ECO:0007744" key="16">
    <source>
        <dbReference type="PDB" id="5CNJ"/>
    </source>
</evidence>
<evidence type="ECO:0007744" key="17">
    <source>
        <dbReference type="PDB" id="7EPA"/>
    </source>
</evidence>
<evidence type="ECO:0007744" key="18">
    <source>
        <dbReference type="PDB" id="7EPB"/>
    </source>
</evidence>
<evidence type="ECO:0007829" key="19">
    <source>
        <dbReference type="PDB" id="4XAQ"/>
    </source>
</evidence>
<evidence type="ECO:0007829" key="20">
    <source>
        <dbReference type="PDB" id="4XAS"/>
    </source>
</evidence>
<evidence type="ECO:0007829" key="21">
    <source>
        <dbReference type="PDB" id="5CNJ"/>
    </source>
</evidence>
<evidence type="ECO:0007829" key="22">
    <source>
        <dbReference type="PDB" id="5KZN"/>
    </source>
</evidence>
<evidence type="ECO:0007829" key="23">
    <source>
        <dbReference type="PDB" id="5KZQ"/>
    </source>
</evidence>
<evidence type="ECO:0007829" key="24">
    <source>
        <dbReference type="PDB" id="7EPB"/>
    </source>
</evidence>
<evidence type="ECO:0007829" key="25">
    <source>
        <dbReference type="PDB" id="7MTR"/>
    </source>
</evidence>
<evidence type="ECO:0007829" key="26">
    <source>
        <dbReference type="PDB" id="7MTS"/>
    </source>
</evidence>
<evidence type="ECO:0007829" key="27">
    <source>
        <dbReference type="PDB" id="8JCU"/>
    </source>
</evidence>
<evidence type="ECO:0007829" key="28">
    <source>
        <dbReference type="PDB" id="8JCW"/>
    </source>
</evidence>
<evidence type="ECO:0007829" key="29">
    <source>
        <dbReference type="PDB" id="8JCZ"/>
    </source>
</evidence>
<evidence type="ECO:0007829" key="30">
    <source>
        <dbReference type="PDB" id="8JD0"/>
    </source>
</evidence>
<evidence type="ECO:0007829" key="31">
    <source>
        <dbReference type="PDB" id="8JD2"/>
    </source>
</evidence>
<evidence type="ECO:0007829" key="32">
    <source>
        <dbReference type="PDB" id="8JD4"/>
    </source>
</evidence>
<organism>
    <name type="scientific">Homo sapiens</name>
    <name type="common">Human</name>
    <dbReference type="NCBI Taxonomy" id="9606"/>
    <lineage>
        <taxon>Eukaryota</taxon>
        <taxon>Metazoa</taxon>
        <taxon>Chordata</taxon>
        <taxon>Craniata</taxon>
        <taxon>Vertebrata</taxon>
        <taxon>Euteleostomi</taxon>
        <taxon>Mammalia</taxon>
        <taxon>Eutheria</taxon>
        <taxon>Euarchontoglires</taxon>
        <taxon>Primates</taxon>
        <taxon>Haplorrhini</taxon>
        <taxon>Catarrhini</taxon>
        <taxon>Hominidae</taxon>
        <taxon>Homo</taxon>
    </lineage>
</organism>
<keyword id="KW-0002">3D-structure</keyword>
<keyword id="KW-1003">Cell membrane</keyword>
<keyword id="KW-0966">Cell projection</keyword>
<keyword id="KW-1015">Disulfide bond</keyword>
<keyword id="KW-0297">G-protein coupled receptor</keyword>
<keyword id="KW-0325">Glycoprotein</keyword>
<keyword id="KW-0472">Membrane</keyword>
<keyword id="KW-1267">Proteomics identification</keyword>
<keyword id="KW-0675">Receptor</keyword>
<keyword id="KW-1185">Reference proteome</keyword>
<keyword id="KW-0732">Signal</keyword>
<keyword id="KW-0770">Synapse</keyword>
<keyword id="KW-0807">Transducer</keyword>
<keyword id="KW-0812">Transmembrane</keyword>
<keyword id="KW-1133">Transmembrane helix</keyword>
<comment type="function">
    <text evidence="2 4 5 6 10 12">Dimeric G protein-coupled receptor which is activated by the excitatory neurotransmitter L-glutamate (PubMed:37286794). Plays critical roles in modulating synaptic transmission and neuronal excitability. Upon activation by glutamate, inhibits presynaptic calcium channels, reducing further glutamate release and dampening excitatory signaling (By similarity). Mechanistically, ligand binding causes a conformation change that triggers signaling via guanine nucleotide-binding proteins (G proteins) and modulates the activity of down-stream effectors, such as adenylate cyclase. May mediate suppression of neurotransmission or may be involved in synaptogenesis or synaptic stabilization.</text>
</comment>
<comment type="function">
    <text evidence="11">(Microbial infection) Plays an important role in influenza virus internalization.</text>
</comment>
<comment type="function">
    <text evidence="8">(Microbial infection) Acts as a host entry factor for rabies virus that hijacks the endocytosis of GRM2 to enter cells.</text>
</comment>
<comment type="function">
    <text evidence="9">(Microbial infection) Acts as a host entry factor for SARS-CoV-2 that hijacks the endocytosis of GRM2 to enter cells.</text>
</comment>
<comment type="subunit">
    <text evidence="2 4 5 6 10">Forms heterodimers with GRM3 or GRM4 (PubMed:37286794). Interacts with TAMALIN (By similarity). Interacts with HTR2A.</text>
</comment>
<comment type="subunit">
    <text evidence="11">(Microbial infection) Interacts with H5N6 virus protein HA.</text>
</comment>
<comment type="subunit">
    <text evidence="8">(Microbial infection) Interacts with rabies virus protein G.</text>
</comment>
<comment type="subunit">
    <text evidence="9">(Microbial infection) Interacts with SARS-CoV-2 virus spike protein S.</text>
</comment>
<comment type="interaction">
    <interactant intactId="EBI-10232876">
        <id>Q14416</id>
    </interactant>
    <interactant intactId="EBI-10961679">
        <id>Q5T8D3-2</id>
        <label>ACBD5</label>
    </interactant>
    <organismsDiffer>false</organismsDiffer>
    <experiments>3</experiments>
</comment>
<comment type="interaction">
    <interactant intactId="EBI-10232876">
        <id>Q14416</id>
    </interactant>
    <interactant intactId="EBI-7730807">
        <id>Q9BYF1</id>
        <label>ACE2</label>
    </interactant>
    <organismsDiffer>false</organismsDiffer>
    <experiments>2</experiments>
</comment>
<comment type="interaction">
    <interactant intactId="EBI-10232876">
        <id>Q14416</id>
    </interactant>
    <interactant intactId="EBI-13059134">
        <id>Q13520</id>
        <label>AQP6</label>
    </interactant>
    <organismsDiffer>false</organismsDiffer>
    <experiments>3</experiments>
</comment>
<comment type="interaction">
    <interactant intactId="EBI-10232876">
        <id>Q14416</id>
    </interactant>
    <interactant intactId="EBI-700794">
        <id>Q13323</id>
        <label>BIK</label>
    </interactant>
    <organismsDiffer>false</organismsDiffer>
    <experiments>3</experiments>
</comment>
<comment type="interaction">
    <interactant intactId="EBI-10232876">
        <id>Q14416</id>
    </interactant>
    <interactant intactId="EBI-947033">
        <id>Q8WV48</id>
        <label>CCDC107</label>
    </interactant>
    <organismsDiffer>false</organismsDiffer>
    <experiments>3</experiments>
</comment>
<comment type="interaction">
    <interactant intactId="EBI-10232876">
        <id>Q14416</id>
    </interactant>
    <interactant intactId="EBI-751440">
        <id>P57739</id>
        <label>CLDN2</label>
    </interactant>
    <organismsDiffer>false</organismsDiffer>
    <experiments>3</experiments>
</comment>
<comment type="interaction">
    <interactant intactId="EBI-10232876">
        <id>Q14416</id>
    </interactant>
    <interactant intactId="EBI-18341636">
        <id>O95484</id>
        <label>CLDN9</label>
    </interactant>
    <organismsDiffer>false</organismsDiffer>
    <experiments>3</experiments>
</comment>
<comment type="interaction">
    <interactant intactId="EBI-10232876">
        <id>Q14416</id>
    </interactant>
    <interactant intactId="EBI-18013275">
        <id>Q7Z7G2</id>
        <label>CPLX4</label>
    </interactant>
    <organismsDiffer>false</organismsDiffer>
    <experiments>3</experiments>
</comment>
<comment type="interaction">
    <interactant intactId="EBI-10232876">
        <id>Q14416</id>
    </interactant>
    <interactant intactId="EBI-1046040">
        <id>P00387</id>
        <label>CYB5R3</label>
    </interactant>
    <organismsDiffer>false</organismsDiffer>
    <experiments>3</experiments>
</comment>
<comment type="interaction">
    <interactant intactId="EBI-10232876">
        <id>Q14416</id>
    </interactant>
    <interactant intactId="EBI-2871277">
        <id>P27487</id>
        <label>DPP4</label>
    </interactant>
    <organismsDiffer>false</organismsDiffer>
    <experiments>2</experiments>
</comment>
<comment type="interaction">
    <interactant intactId="EBI-10232876">
        <id>Q14416</id>
    </interactant>
    <interactant intactId="EBI-15573967">
        <id>P28223-1</id>
        <label>HTR2A</label>
    </interactant>
    <organismsDiffer>false</organismsDiffer>
    <experiments>4</experiments>
</comment>
<comment type="interaction">
    <interactant intactId="EBI-10232876">
        <id>Q14416</id>
    </interactant>
    <interactant intactId="EBI-373355">
        <id>Q5SR56</id>
        <label>MFSD14B</label>
    </interactant>
    <organismsDiffer>false</organismsDiffer>
    <experiments>3</experiments>
</comment>
<comment type="interaction">
    <interactant intactId="EBI-10232876">
        <id>Q14416</id>
    </interactant>
    <interactant intactId="EBI-724754">
        <id>O14880</id>
        <label>MGST3</label>
    </interactant>
    <organismsDiffer>false</organismsDiffer>
    <experiments>3</experiments>
</comment>
<comment type="interaction">
    <interactant intactId="EBI-10232876">
        <id>Q14416</id>
    </interactant>
    <interactant intactId="EBI-6163737">
        <id>Q8N4V1</id>
        <label>MMGT1</label>
    </interactant>
    <organismsDiffer>false</organismsDiffer>
    <experiments>3</experiments>
</comment>
<comment type="interaction">
    <interactant intactId="EBI-10232876">
        <id>Q14416</id>
    </interactant>
    <interactant intactId="EBI-10178964">
        <id>Q58DX5</id>
        <label>NAALADL2</label>
    </interactant>
    <organismsDiffer>false</organismsDiffer>
    <experiments>3</experiments>
</comment>
<comment type="interaction">
    <interactant intactId="EBI-10232876">
        <id>Q14416</id>
    </interactant>
    <interactant intactId="EBI-716063">
        <id>Q13113</id>
        <label>PDZK1IP1</label>
    </interactant>
    <organismsDiffer>false</organismsDiffer>
    <experiments>3</experiments>
</comment>
<comment type="interaction">
    <interactant intactId="EBI-10232876">
        <id>Q14416</id>
    </interactant>
    <interactant intactId="EBI-3920694">
        <id>Q9NR31</id>
        <label>SAR1A</label>
    </interactant>
    <organismsDiffer>false</organismsDiffer>
    <experiments>3</experiments>
</comment>
<comment type="interaction">
    <interactant intactId="EBI-10232876">
        <id>Q14416</id>
    </interactant>
    <interactant intactId="EBI-10262251">
        <id>Q8IWU4</id>
        <label>SLC30A8</label>
    </interactant>
    <organismsDiffer>false</organismsDiffer>
    <experiments>3</experiments>
</comment>
<comment type="interaction">
    <interactant intactId="EBI-10232876">
        <id>Q14416</id>
    </interactant>
    <interactant intactId="EBI-9978441">
        <id>Q9H2H9</id>
        <label>SLC38A1</label>
    </interactant>
    <organismsDiffer>false</organismsDiffer>
    <experiments>3</experiments>
</comment>
<comment type="interaction">
    <interactant intactId="EBI-10232876">
        <id>Q14416</id>
    </interactant>
    <interactant intactId="EBI-1211440">
        <id>P27105</id>
        <label>STOM</label>
    </interactant>
    <organismsDiffer>false</organismsDiffer>
    <experiments>3</experiments>
</comment>
<comment type="interaction">
    <interactant intactId="EBI-10232876">
        <id>Q14416</id>
    </interactant>
    <interactant intactId="EBI-19763514">
        <id>Q8N3G9</id>
        <label>TMEM130</label>
    </interactant>
    <organismsDiffer>false</organismsDiffer>
    <experiments>3</experiments>
</comment>
<comment type="interaction">
    <interactant intactId="EBI-10232876">
        <id>Q14416</id>
    </interactant>
    <interactant intactId="EBI-10982110">
        <id>Q96Q45-2</id>
        <label>TMEM237</label>
    </interactant>
    <organismsDiffer>false</organismsDiffer>
    <experiments>3</experiments>
</comment>
<comment type="interaction">
    <interactant intactId="EBI-10232876">
        <id>Q14416</id>
    </interactant>
    <interactant intactId="EBI-10314986">
        <id>Q9NWD8</id>
        <label>TMEM248</label>
    </interactant>
    <organismsDiffer>false</organismsDiffer>
    <experiments>3</experiments>
</comment>
<comment type="interaction">
    <interactant intactId="EBI-10232876">
        <id>Q14416</id>
    </interactant>
    <interactant intactId="EBI-17670824">
        <id>Q8WUV1</id>
        <label>TSPAN18</label>
    </interactant>
    <organismsDiffer>false</organismsDiffer>
    <experiments>3</experiments>
</comment>
<comment type="interaction">
    <interactant intactId="EBI-10232876">
        <id>Q14416</id>
    </interactant>
    <interactant intactId="EBI-10173939">
        <id>Q9UMX0-2</id>
        <label>UBQLN1</label>
    </interactant>
    <organismsDiffer>false</organismsDiffer>
    <experiments>3</experiments>
</comment>
<comment type="interaction">
    <interactant intactId="EBI-10232876">
        <id>Q14416</id>
    </interactant>
    <interactant intactId="EBI-25474821">
        <id>P0DTC2</id>
        <label>S</label>
    </interactant>
    <organismsDiffer>true</organismsDiffer>
    <experiments>4</experiments>
</comment>
<comment type="subcellular location">
    <subcellularLocation>
        <location>Cell membrane</location>
        <topology>Multi-pass membrane protein</topology>
    </subcellularLocation>
    <subcellularLocation>
        <location evidence="1">Synapse</location>
    </subcellularLocation>
    <subcellularLocation>
        <location evidence="1">Cell projection</location>
        <location evidence="1">Dendrite</location>
    </subcellularLocation>
</comment>
<comment type="tissue specificity">
    <text evidence="4">Detected in brain cortex (at protein level). Widely expressed in different regions of the adult brain as well as in fetal brain.</text>
</comment>
<comment type="similarity">
    <text evidence="13">Belongs to the G-protein coupled receptor 3 family.</text>
</comment>
<dbReference type="EMBL" id="L35318">
    <property type="protein sequence ID" value="AAA76855.1"/>
    <property type="molecule type" value="mRNA"/>
</dbReference>
<dbReference type="EMBL" id="AB045011">
    <property type="protein sequence ID" value="BAB19817.1"/>
    <property type="molecule type" value="Genomic_DNA"/>
</dbReference>
<dbReference type="EMBL" id="AY999299">
    <property type="protein sequence ID" value="AAY14640.1"/>
    <property type="molecule type" value="mRNA"/>
</dbReference>
<dbReference type="EMBL" id="EU432122">
    <property type="protein sequence ID" value="ABY87921.1"/>
    <property type="molecule type" value="mRNA"/>
</dbReference>
<dbReference type="EMBL" id="CH471055">
    <property type="protein sequence ID" value="EAW65150.1"/>
    <property type="molecule type" value="Genomic_DNA"/>
</dbReference>
<dbReference type="EMBL" id="BC113615">
    <property type="protein sequence ID" value="AAI13616.1"/>
    <property type="molecule type" value="mRNA"/>
</dbReference>
<dbReference type="EMBL" id="BC113619">
    <property type="protein sequence ID" value="AAI13620.1"/>
    <property type="molecule type" value="mRNA"/>
</dbReference>
<dbReference type="CCDS" id="CCDS2834.1"/>
<dbReference type="RefSeq" id="NP_000830.2">
    <property type="nucleotide sequence ID" value="NM_000839.5"/>
</dbReference>
<dbReference type="RefSeq" id="XP_016861760.1">
    <property type="nucleotide sequence ID" value="XM_017006271.2"/>
</dbReference>
<dbReference type="RefSeq" id="XP_054202342.1">
    <property type="nucleotide sequence ID" value="XM_054346367.1"/>
</dbReference>
<dbReference type="PDB" id="4XAQ">
    <property type="method" value="X-ray"/>
    <property type="resolution" value="2.21 A"/>
    <property type="chains" value="A/B=2-493"/>
</dbReference>
<dbReference type="PDB" id="4XAS">
    <property type="method" value="X-ray"/>
    <property type="resolution" value="2.35 A"/>
    <property type="chains" value="A/B=2-493"/>
</dbReference>
<dbReference type="PDB" id="5CNI">
    <property type="method" value="X-ray"/>
    <property type="resolution" value="2.69 A"/>
    <property type="chains" value="A/B=2-493"/>
</dbReference>
<dbReference type="PDB" id="5CNJ">
    <property type="method" value="X-ray"/>
    <property type="resolution" value="2.65 A"/>
    <property type="chains" value="A/B=2-493"/>
</dbReference>
<dbReference type="PDB" id="5KZN">
    <property type="method" value="X-ray"/>
    <property type="resolution" value="2.80 A"/>
    <property type="chains" value="A=1-562"/>
</dbReference>
<dbReference type="PDB" id="5KZQ">
    <property type="method" value="X-ray"/>
    <property type="resolution" value="2.80 A"/>
    <property type="chains" value="A=1-562"/>
</dbReference>
<dbReference type="PDB" id="7E9G">
    <property type="method" value="EM"/>
    <property type="resolution" value="3.50 A"/>
    <property type="chains" value="R/S=19-825"/>
</dbReference>
<dbReference type="PDB" id="7EPA">
    <property type="method" value="EM"/>
    <property type="resolution" value="3.60 A"/>
    <property type="chains" value="A/B=19-825"/>
</dbReference>
<dbReference type="PDB" id="7EPB">
    <property type="method" value="EM"/>
    <property type="resolution" value="3.10 A"/>
    <property type="chains" value="A/B=19-825"/>
</dbReference>
<dbReference type="PDB" id="7EPD">
    <property type="method" value="EM"/>
    <property type="resolution" value="3.90 A"/>
    <property type="chains" value="A=19-825"/>
</dbReference>
<dbReference type="PDB" id="7MTQ">
    <property type="method" value="EM"/>
    <property type="resolution" value="3.65 A"/>
    <property type="chains" value="A/B=18-872"/>
</dbReference>
<dbReference type="PDB" id="7MTR">
    <property type="method" value="EM"/>
    <property type="resolution" value="3.30 A"/>
    <property type="chains" value="A/B=18-872"/>
</dbReference>
<dbReference type="PDB" id="7MTS">
    <property type="method" value="EM"/>
    <property type="resolution" value="3.20 A"/>
    <property type="chains" value="A/B=18-872"/>
</dbReference>
<dbReference type="PDB" id="8JCU">
    <property type="method" value="EM"/>
    <property type="resolution" value="2.80 A"/>
    <property type="chains" value="2=19-872"/>
</dbReference>
<dbReference type="PDB" id="8JCV">
    <property type="method" value="EM"/>
    <property type="resolution" value="3.40 A"/>
    <property type="chains" value="2=19-872"/>
</dbReference>
<dbReference type="PDB" id="8JCW">
    <property type="method" value="EM"/>
    <property type="resolution" value="3.00 A"/>
    <property type="chains" value="2=19-872"/>
</dbReference>
<dbReference type="PDB" id="8JCX">
    <property type="method" value="EM"/>
    <property type="resolution" value="3.00 A"/>
    <property type="chains" value="2=19-872"/>
</dbReference>
<dbReference type="PDB" id="8JCY">
    <property type="method" value="EM"/>
    <property type="resolution" value="2.90 A"/>
    <property type="chains" value="2=19-872"/>
</dbReference>
<dbReference type="PDB" id="8JCZ">
    <property type="method" value="EM"/>
    <property type="resolution" value="3.00 A"/>
    <property type="chains" value="2=19-872"/>
</dbReference>
<dbReference type="PDB" id="8JD0">
    <property type="method" value="EM"/>
    <property type="resolution" value="3.30 A"/>
    <property type="chains" value="2=19-872"/>
</dbReference>
<dbReference type="PDB" id="8JD1">
    <property type="method" value="EM"/>
    <property type="resolution" value="3.70 A"/>
    <property type="chains" value="2=19-872"/>
</dbReference>
<dbReference type="PDB" id="8JD2">
    <property type="method" value="EM"/>
    <property type="resolution" value="2.80 A"/>
    <property type="chains" value="2=19-872"/>
</dbReference>
<dbReference type="PDB" id="8JD3">
    <property type="method" value="EM"/>
    <property type="resolution" value="3.30 A"/>
    <property type="chains" value="2=19-872"/>
</dbReference>
<dbReference type="PDB" id="8JD4">
    <property type="method" value="EM"/>
    <property type="resolution" value="2.90 A"/>
    <property type="chains" value="2=19-872"/>
</dbReference>
<dbReference type="PDB" id="8JD5">
    <property type="method" value="EM"/>
    <property type="resolution" value="3.60 A"/>
    <property type="chains" value="2=19-872"/>
</dbReference>
<dbReference type="PDB" id="8WG9">
    <property type="method" value="EM"/>
    <property type="resolution" value="4.46 A"/>
    <property type="chains" value="C=19-872"/>
</dbReference>
<dbReference type="PDB" id="8WGB">
    <property type="method" value="EM"/>
    <property type="resolution" value="3.70 A"/>
    <property type="chains" value="B=19-872"/>
</dbReference>
<dbReference type="PDB" id="8WGC">
    <property type="method" value="EM"/>
    <property type="resolution" value="5.95 A"/>
    <property type="chains" value="D=19-872"/>
</dbReference>
<dbReference type="PDB" id="8WGD">
    <property type="method" value="EM"/>
    <property type="resolution" value="4.45 A"/>
    <property type="chains" value="C=19-872"/>
</dbReference>
<dbReference type="PDBsum" id="4XAQ"/>
<dbReference type="PDBsum" id="4XAS"/>
<dbReference type="PDBsum" id="5CNI"/>
<dbReference type="PDBsum" id="5CNJ"/>
<dbReference type="PDBsum" id="5KZN"/>
<dbReference type="PDBsum" id="5KZQ"/>
<dbReference type="PDBsum" id="7E9G"/>
<dbReference type="PDBsum" id="7EPA"/>
<dbReference type="PDBsum" id="7EPB"/>
<dbReference type="PDBsum" id="7EPD"/>
<dbReference type="PDBsum" id="7MTQ"/>
<dbReference type="PDBsum" id="7MTR"/>
<dbReference type="PDBsum" id="7MTS"/>
<dbReference type="PDBsum" id="8JCU"/>
<dbReference type="PDBsum" id="8JCV"/>
<dbReference type="PDBsum" id="8JCW"/>
<dbReference type="PDBsum" id="8JCX"/>
<dbReference type="PDBsum" id="8JCY"/>
<dbReference type="PDBsum" id="8JCZ"/>
<dbReference type="PDBsum" id="8JD0"/>
<dbReference type="PDBsum" id="8JD1"/>
<dbReference type="PDBsum" id="8JD2"/>
<dbReference type="PDBsum" id="8JD3"/>
<dbReference type="PDBsum" id="8JD4"/>
<dbReference type="PDBsum" id="8JD5"/>
<dbReference type="PDBsum" id="8WG9"/>
<dbReference type="PDBsum" id="8WGB"/>
<dbReference type="PDBsum" id="8WGC"/>
<dbReference type="PDBsum" id="8WGD"/>
<dbReference type="EMDB" id="EMD-23994"/>
<dbReference type="EMDB" id="EMD-23995"/>
<dbReference type="EMDB" id="EMD-23996"/>
<dbReference type="EMDB" id="EMD-31031"/>
<dbReference type="EMDB" id="EMD-31235"/>
<dbReference type="EMDB" id="EMD-31236"/>
<dbReference type="EMDB" id="EMD-36174"/>
<dbReference type="EMDB" id="EMD-36176"/>
<dbReference type="EMDB" id="EMD-37506"/>
<dbReference type="EMDB" id="EMD-37507"/>
<dbReference type="EMDB" id="EMD-37508"/>
<dbReference type="EMDB" id="EMD-37509"/>
<dbReference type="SMR" id="Q14416"/>
<dbReference type="BioGRID" id="109169">
    <property type="interactions" value="371"/>
</dbReference>
<dbReference type="CORUM" id="Q14416"/>
<dbReference type="DIP" id="DIP-59826N"/>
<dbReference type="FunCoup" id="Q14416">
    <property type="interactions" value="1130"/>
</dbReference>
<dbReference type="IntAct" id="Q14416">
    <property type="interactions" value="31"/>
</dbReference>
<dbReference type="MINT" id="Q14416"/>
<dbReference type="STRING" id="9606.ENSP00000378492"/>
<dbReference type="BindingDB" id="Q14416"/>
<dbReference type="ChEMBL" id="CHEMBL5137"/>
<dbReference type="DrugBank" id="DB04256">
    <property type="generic name" value="(S)-alpha-methyl-4-carboxyphenylglycine"/>
</dbReference>
<dbReference type="DrugBank" id="DB11923">
    <property type="generic name" value="Decoglurant"/>
</dbReference>
<dbReference type="DrugBank" id="DB12059">
    <property type="generic name" value="JNJ-40411813"/>
</dbReference>
<dbReference type="DrugBank" id="DB13016">
    <property type="generic name" value="LY-2300559"/>
</dbReference>
<dbReference type="DrugBank" id="DB05096">
    <property type="generic name" value="LY2140023"/>
</dbReference>
<dbReference type="DrugBank" id="DB04870">
    <property type="generic name" value="Oleoyl-estrone"/>
</dbReference>
<dbReference type="DrugBank" id="DB02999">
    <property type="generic name" value="Quisqualic acid"/>
</dbReference>
<dbReference type="DrugCentral" id="Q14416"/>
<dbReference type="GuidetoPHARMACOLOGY" id="290"/>
<dbReference type="TCDB" id="9.A.14.7.9">
    <property type="family name" value="the g-protein-coupled receptor (gpcr) family"/>
</dbReference>
<dbReference type="GlyCosmos" id="Q14416">
    <property type="glycosylation" value="5 sites, No reported glycans"/>
</dbReference>
<dbReference type="GlyGen" id="Q14416">
    <property type="glycosylation" value="5 sites, 1 N-linked glycan (1 site)"/>
</dbReference>
<dbReference type="iPTMnet" id="Q14416"/>
<dbReference type="PhosphoSitePlus" id="Q14416"/>
<dbReference type="BioMuta" id="GRM2"/>
<dbReference type="DMDM" id="76803802"/>
<dbReference type="MassIVE" id="Q14416"/>
<dbReference type="PaxDb" id="9606-ENSP00000378492"/>
<dbReference type="PeptideAtlas" id="Q14416"/>
<dbReference type="ProteomicsDB" id="59986"/>
<dbReference type="Antibodypedia" id="14188">
    <property type="antibodies" value="533 antibodies from 43 providers"/>
</dbReference>
<dbReference type="DNASU" id="2912"/>
<dbReference type="Ensembl" id="ENST00000395052.8">
    <property type="protein sequence ID" value="ENSP00000378492.3"/>
    <property type="gene ID" value="ENSG00000164082.15"/>
</dbReference>
<dbReference type="GeneID" id="2912"/>
<dbReference type="KEGG" id="hsa:2912"/>
<dbReference type="MANE-Select" id="ENST00000395052.8">
    <property type="protein sequence ID" value="ENSP00000378492.3"/>
    <property type="RefSeq nucleotide sequence ID" value="NM_000839.5"/>
    <property type="RefSeq protein sequence ID" value="NP_000830.2"/>
</dbReference>
<dbReference type="UCSC" id="uc010hlv.4">
    <property type="organism name" value="human"/>
</dbReference>
<dbReference type="AGR" id="HGNC:4594"/>
<dbReference type="CTD" id="2912"/>
<dbReference type="DisGeNET" id="2912"/>
<dbReference type="GeneCards" id="GRM2"/>
<dbReference type="HGNC" id="HGNC:4594">
    <property type="gene designation" value="GRM2"/>
</dbReference>
<dbReference type="HPA" id="ENSG00000164082">
    <property type="expression patterns" value="Tissue enriched (brain)"/>
</dbReference>
<dbReference type="MIM" id="604099">
    <property type="type" value="gene"/>
</dbReference>
<dbReference type="neXtProt" id="NX_Q14416"/>
<dbReference type="OpenTargets" id="ENSG00000164082"/>
<dbReference type="PharmGKB" id="PA28991"/>
<dbReference type="VEuPathDB" id="HostDB:ENSG00000164082"/>
<dbReference type="eggNOG" id="KOG1056">
    <property type="taxonomic scope" value="Eukaryota"/>
</dbReference>
<dbReference type="GeneTree" id="ENSGT01030000234595"/>
<dbReference type="InParanoid" id="Q14416"/>
<dbReference type="OMA" id="HEKGNPT"/>
<dbReference type="OrthoDB" id="425344at2759"/>
<dbReference type="PAN-GO" id="Q14416">
    <property type="GO annotations" value="4 GO annotations based on evolutionary models"/>
</dbReference>
<dbReference type="PhylomeDB" id="Q14416"/>
<dbReference type="TreeFam" id="TF313240"/>
<dbReference type="PathwayCommons" id="Q14416"/>
<dbReference type="Reactome" id="R-HSA-418594">
    <property type="pathway name" value="G alpha (i) signalling events"/>
</dbReference>
<dbReference type="Reactome" id="R-HSA-420499">
    <property type="pathway name" value="Class C/3 (Metabotropic glutamate/pheromone receptors)"/>
</dbReference>
<dbReference type="SignaLink" id="Q14416"/>
<dbReference type="SIGNOR" id="Q14416"/>
<dbReference type="BioGRID-ORCS" id="2912">
    <property type="hits" value="9 hits in 1154 CRISPR screens"/>
</dbReference>
<dbReference type="CD-CODE" id="FB4E32DD">
    <property type="entry name" value="Presynaptic clusters and postsynaptic densities"/>
</dbReference>
<dbReference type="EvolutionaryTrace" id="Q14416"/>
<dbReference type="GeneWiki" id="Metabotropic_glutamate_receptor_2"/>
<dbReference type="GenomeRNAi" id="2912"/>
<dbReference type="Pharos" id="Q14416">
    <property type="development level" value="Tchem"/>
</dbReference>
<dbReference type="PRO" id="PR:Q14416"/>
<dbReference type="Proteomes" id="UP000005640">
    <property type="component" value="Chromosome 3"/>
</dbReference>
<dbReference type="RNAct" id="Q14416">
    <property type="molecule type" value="protein"/>
</dbReference>
<dbReference type="Bgee" id="ENSG00000164082">
    <property type="expression patterns" value="Expressed in cortical plate and 156 other cell types or tissues"/>
</dbReference>
<dbReference type="ExpressionAtlas" id="Q14416">
    <property type="expression patterns" value="baseline and differential"/>
</dbReference>
<dbReference type="GO" id="GO:0097449">
    <property type="term" value="C:astrocyte projection"/>
    <property type="evidence" value="ECO:0000250"/>
    <property type="project" value="ARUK-UCL"/>
</dbReference>
<dbReference type="GO" id="GO:0030424">
    <property type="term" value="C:axon"/>
    <property type="evidence" value="ECO:0000250"/>
    <property type="project" value="ARUK-UCL"/>
</dbReference>
<dbReference type="GO" id="GO:0030425">
    <property type="term" value="C:dendrite"/>
    <property type="evidence" value="ECO:0007669"/>
    <property type="project" value="UniProtKB-SubCell"/>
</dbReference>
<dbReference type="GO" id="GO:0098978">
    <property type="term" value="C:glutamatergic synapse"/>
    <property type="evidence" value="ECO:0007669"/>
    <property type="project" value="Ensembl"/>
</dbReference>
<dbReference type="GO" id="GO:0005886">
    <property type="term" value="C:plasma membrane"/>
    <property type="evidence" value="ECO:0000314"/>
    <property type="project" value="UniProt"/>
</dbReference>
<dbReference type="GO" id="GO:0045211">
    <property type="term" value="C:postsynaptic membrane"/>
    <property type="evidence" value="ECO:0007669"/>
    <property type="project" value="Ensembl"/>
</dbReference>
<dbReference type="GO" id="GO:0042734">
    <property type="term" value="C:presynaptic membrane"/>
    <property type="evidence" value="ECO:0007669"/>
    <property type="project" value="Ensembl"/>
</dbReference>
<dbReference type="GO" id="GO:0005246">
    <property type="term" value="F:calcium channel regulator activity"/>
    <property type="evidence" value="ECO:0007669"/>
    <property type="project" value="Ensembl"/>
</dbReference>
<dbReference type="GO" id="GO:0004930">
    <property type="term" value="F:G protein-coupled receptor activity"/>
    <property type="evidence" value="ECO:0000304"/>
    <property type="project" value="UniProtKB"/>
</dbReference>
<dbReference type="GO" id="GO:0008066">
    <property type="term" value="F:glutamate receptor activity"/>
    <property type="evidence" value="ECO:0000314"/>
    <property type="project" value="UniProt"/>
</dbReference>
<dbReference type="GO" id="GO:0001641">
    <property type="term" value="F:group II metabotropic glutamate receptor activity"/>
    <property type="evidence" value="ECO:0000318"/>
    <property type="project" value="GO_Central"/>
</dbReference>
<dbReference type="GO" id="GO:0097110">
    <property type="term" value="F:scaffold protein binding"/>
    <property type="evidence" value="ECO:0000250"/>
    <property type="project" value="ARUK-UCL"/>
</dbReference>
<dbReference type="GO" id="GO:0035095">
    <property type="term" value="P:behavioral response to nicotine"/>
    <property type="evidence" value="ECO:0007669"/>
    <property type="project" value="Ensembl"/>
</dbReference>
<dbReference type="GO" id="GO:0033554">
    <property type="term" value="P:cellular response to stress"/>
    <property type="evidence" value="ECO:0007669"/>
    <property type="project" value="Ensembl"/>
</dbReference>
<dbReference type="GO" id="GO:0007268">
    <property type="term" value="P:chemical synaptic transmission"/>
    <property type="evidence" value="ECO:0000304"/>
    <property type="project" value="ProtInc"/>
</dbReference>
<dbReference type="GO" id="GO:0007216">
    <property type="term" value="P:G protein-coupled glutamate receptor signaling pathway"/>
    <property type="evidence" value="ECO:0000314"/>
    <property type="project" value="UniProt"/>
</dbReference>
<dbReference type="GO" id="GO:0010467">
    <property type="term" value="P:gene expression"/>
    <property type="evidence" value="ECO:0007669"/>
    <property type="project" value="Ensembl"/>
</dbReference>
<dbReference type="GO" id="GO:0014047">
    <property type="term" value="P:glutamate secretion"/>
    <property type="evidence" value="ECO:0007669"/>
    <property type="project" value="Ensembl"/>
</dbReference>
<dbReference type="GO" id="GO:0090461">
    <property type="term" value="P:intracellular glutamate homeostasis"/>
    <property type="evidence" value="ECO:0007669"/>
    <property type="project" value="Ensembl"/>
</dbReference>
<dbReference type="GO" id="GO:0060292">
    <property type="term" value="P:long-term synaptic depression"/>
    <property type="evidence" value="ECO:0007669"/>
    <property type="project" value="Ensembl"/>
</dbReference>
<dbReference type="GO" id="GO:0007194">
    <property type="term" value="P:negative regulation of adenylate cyclase activity"/>
    <property type="evidence" value="ECO:0000304"/>
    <property type="project" value="ProtInc"/>
</dbReference>
<dbReference type="GO" id="GO:0051897">
    <property type="term" value="P:positive regulation of phosphatidylinositol 3-kinase/protein kinase B signal transduction"/>
    <property type="evidence" value="ECO:0000250"/>
    <property type="project" value="ARUK-UCL"/>
</dbReference>
<dbReference type="GO" id="GO:0099171">
    <property type="term" value="P:presynaptic modulation of chemical synaptic transmission"/>
    <property type="evidence" value="ECO:0007669"/>
    <property type="project" value="Ensembl"/>
</dbReference>
<dbReference type="GO" id="GO:0014059">
    <property type="term" value="P:regulation of dopamine secretion"/>
    <property type="evidence" value="ECO:0007669"/>
    <property type="project" value="Ensembl"/>
</dbReference>
<dbReference type="GO" id="GO:0014048">
    <property type="term" value="P:regulation of glutamate secretion"/>
    <property type="evidence" value="ECO:0007669"/>
    <property type="project" value="Ensembl"/>
</dbReference>
<dbReference type="GO" id="GO:2001023">
    <property type="term" value="P:regulation of response to drug"/>
    <property type="evidence" value="ECO:0007669"/>
    <property type="project" value="Ensembl"/>
</dbReference>
<dbReference type="GO" id="GO:0051966">
    <property type="term" value="P:regulation of synaptic transmission, glutamatergic"/>
    <property type="evidence" value="ECO:0000318"/>
    <property type="project" value="GO_Central"/>
</dbReference>
<dbReference type="GO" id="GO:0042220">
    <property type="term" value="P:response to cocaine"/>
    <property type="evidence" value="ECO:0007669"/>
    <property type="project" value="Ensembl"/>
</dbReference>
<dbReference type="CDD" id="cd06375">
    <property type="entry name" value="PBP1_mGluR_groupII"/>
    <property type="match status" value="1"/>
</dbReference>
<dbReference type="FunFam" id="3.40.50.2300:FF:001113">
    <property type="match status" value="1"/>
</dbReference>
<dbReference type="FunFam" id="3.40.50.2300:FF:001127">
    <property type="match status" value="1"/>
</dbReference>
<dbReference type="FunFam" id="2.10.50.30:FF:000001">
    <property type="entry name" value="metabotropic glutamate receptor 1"/>
    <property type="match status" value="1"/>
</dbReference>
<dbReference type="FunFam" id="3.40.50.2300:FF:000029">
    <property type="entry name" value="Metabotropic glutamate receptor 3"/>
    <property type="match status" value="1"/>
</dbReference>
<dbReference type="Gene3D" id="3.40.50.2300">
    <property type="match status" value="2"/>
</dbReference>
<dbReference type="Gene3D" id="2.10.50.30">
    <property type="entry name" value="GPCR, family 3, nine cysteines domain"/>
    <property type="match status" value="1"/>
</dbReference>
<dbReference type="InterPro" id="IPR001828">
    <property type="entry name" value="ANF_lig-bd_rcpt"/>
</dbReference>
<dbReference type="InterPro" id="IPR000337">
    <property type="entry name" value="GPCR_3"/>
</dbReference>
<dbReference type="InterPro" id="IPR011500">
    <property type="entry name" value="GPCR_3_9-Cys_dom"/>
</dbReference>
<dbReference type="InterPro" id="IPR038550">
    <property type="entry name" value="GPCR_3_9-Cys_sf"/>
</dbReference>
<dbReference type="InterPro" id="IPR017978">
    <property type="entry name" value="GPCR_3_C"/>
</dbReference>
<dbReference type="InterPro" id="IPR017979">
    <property type="entry name" value="GPCR_3_CS"/>
</dbReference>
<dbReference type="InterPro" id="IPR001458">
    <property type="entry name" value="GPCR_3_mGluR2"/>
</dbReference>
<dbReference type="InterPro" id="IPR000162">
    <property type="entry name" value="GPCR_3_mtglu_rcpt"/>
</dbReference>
<dbReference type="InterPro" id="IPR050726">
    <property type="entry name" value="mGluR"/>
</dbReference>
<dbReference type="InterPro" id="IPR028082">
    <property type="entry name" value="Peripla_BP_I"/>
</dbReference>
<dbReference type="PANTHER" id="PTHR24060">
    <property type="entry name" value="METABOTROPIC GLUTAMATE RECEPTOR"/>
    <property type="match status" value="1"/>
</dbReference>
<dbReference type="Pfam" id="PF00003">
    <property type="entry name" value="7tm_3"/>
    <property type="match status" value="1"/>
</dbReference>
<dbReference type="Pfam" id="PF01094">
    <property type="entry name" value="ANF_receptor"/>
    <property type="match status" value="1"/>
</dbReference>
<dbReference type="Pfam" id="PF07562">
    <property type="entry name" value="NCD3G"/>
    <property type="match status" value="1"/>
</dbReference>
<dbReference type="PRINTS" id="PR00248">
    <property type="entry name" value="GPCRMGR"/>
</dbReference>
<dbReference type="PRINTS" id="PR01052">
    <property type="entry name" value="MTABOTROPC2R"/>
</dbReference>
<dbReference type="PRINTS" id="PR00593">
    <property type="entry name" value="MTABOTROPICR"/>
</dbReference>
<dbReference type="SUPFAM" id="SSF53822">
    <property type="entry name" value="Periplasmic binding protein-like I"/>
    <property type="match status" value="1"/>
</dbReference>
<dbReference type="PROSITE" id="PS00979">
    <property type="entry name" value="G_PROTEIN_RECEP_F3_1"/>
    <property type="match status" value="1"/>
</dbReference>
<dbReference type="PROSITE" id="PS00980">
    <property type="entry name" value="G_PROTEIN_RECEP_F3_2"/>
    <property type="match status" value="1"/>
</dbReference>
<dbReference type="PROSITE" id="PS00981">
    <property type="entry name" value="G_PROTEIN_RECEP_F3_3"/>
    <property type="match status" value="1"/>
</dbReference>
<dbReference type="PROSITE" id="PS50259">
    <property type="entry name" value="G_PROTEIN_RECEP_F3_4"/>
    <property type="match status" value="1"/>
</dbReference>
<proteinExistence type="evidence at protein level"/>
<protein>
    <recommendedName>
        <fullName>Metabotropic glutamate receptor 2</fullName>
        <shortName>mGluR2</shortName>
    </recommendedName>
</protein>
<name>GRM2_HUMAN</name>
<feature type="signal peptide" evidence="3">
    <location>
        <begin position="1"/>
        <end position="18"/>
    </location>
</feature>
<feature type="chain" id="PRO_0000012925" description="Metabotropic glutamate receptor 2">
    <location>
        <begin position="19"/>
        <end position="872"/>
    </location>
</feature>
<feature type="topological domain" description="Extracellular" evidence="3">
    <location>
        <begin position="19"/>
        <end position="567"/>
    </location>
</feature>
<feature type="transmembrane region" description="Helical; Name=1" evidence="3">
    <location>
        <begin position="568"/>
        <end position="590"/>
    </location>
</feature>
<feature type="topological domain" description="Cytoplasmic" evidence="3">
    <location>
        <begin position="591"/>
        <end position="604"/>
    </location>
</feature>
<feature type="transmembrane region" description="Helical; Name=2" evidence="3">
    <location>
        <begin position="605"/>
        <end position="625"/>
    </location>
</feature>
<feature type="topological domain" description="Extracellular" evidence="3">
    <location>
        <begin position="626"/>
        <end position="636"/>
    </location>
</feature>
<feature type="transmembrane region" description="Helical; Name=3" evidence="3">
    <location>
        <begin position="637"/>
        <end position="655"/>
    </location>
</feature>
<feature type="topological domain" description="Cytoplasmic" evidence="3">
    <location>
        <begin position="656"/>
        <end position="679"/>
    </location>
</feature>
<feature type="transmembrane region" description="Helical; Name=4" evidence="3">
    <location>
        <begin position="680"/>
        <end position="700"/>
    </location>
</feature>
<feature type="topological domain" description="Extracellular" evidence="3">
    <location>
        <begin position="701"/>
        <end position="725"/>
    </location>
</feature>
<feature type="transmembrane region" description="Helical; Name=5" evidence="3">
    <location>
        <begin position="726"/>
        <end position="747"/>
    </location>
</feature>
<feature type="topological domain" description="Cytoplasmic" evidence="3">
    <location>
        <begin position="748"/>
        <end position="760"/>
    </location>
</feature>
<feature type="transmembrane region" description="Helical; Name=6" evidence="3">
    <location>
        <begin position="761"/>
        <end position="783"/>
    </location>
</feature>
<feature type="topological domain" description="Extracellular" evidence="3">
    <location>
        <begin position="784"/>
        <end position="793"/>
    </location>
</feature>
<feature type="transmembrane region" description="Helical; Name=7" evidence="3">
    <location>
        <begin position="794"/>
        <end position="819"/>
    </location>
</feature>
<feature type="topological domain" description="Cytoplasmic" evidence="3">
    <location>
        <begin position="820"/>
        <end position="872"/>
    </location>
</feature>
<feature type="region of interest" description="Important for interaction with HTR2A">
    <location>
        <begin position="677"/>
        <end position="685"/>
    </location>
</feature>
<feature type="binding site" evidence="7">
    <location>
        <position position="57"/>
    </location>
    <ligand>
        <name>L-glutamate</name>
        <dbReference type="ChEBI" id="CHEBI:29985"/>
    </ligand>
</feature>
<feature type="binding site" evidence="7">
    <location>
        <position position="61"/>
    </location>
    <ligand>
        <name>L-glutamate</name>
        <dbReference type="ChEBI" id="CHEBI:29985"/>
    </ligand>
</feature>
<feature type="binding site" evidence="7">
    <location>
        <position position="145"/>
    </location>
    <ligand>
        <name>L-glutamate</name>
        <dbReference type="ChEBI" id="CHEBI:29985"/>
    </ligand>
</feature>
<feature type="binding site" evidence="7">
    <location>
        <position position="166"/>
    </location>
    <ligand>
        <name>L-glutamate</name>
        <dbReference type="ChEBI" id="CHEBI:29985"/>
    </ligand>
</feature>
<feature type="binding site" evidence="7">
    <location>
        <position position="168"/>
    </location>
    <ligand>
        <name>L-glutamate</name>
        <dbReference type="ChEBI" id="CHEBI:29985"/>
    </ligand>
</feature>
<feature type="binding site" evidence="7">
    <location>
        <position position="295"/>
    </location>
    <ligand>
        <name>L-glutamate</name>
        <dbReference type="ChEBI" id="CHEBI:29985"/>
    </ligand>
</feature>
<feature type="binding site" evidence="7">
    <location>
        <position position="377"/>
    </location>
    <ligand>
        <name>L-glutamate</name>
        <dbReference type="ChEBI" id="CHEBI:29985"/>
    </ligand>
</feature>
<feature type="glycosylation site" description="N-linked (GlcNAc...) asparagine" evidence="7">
    <location>
        <position position="203"/>
    </location>
</feature>
<feature type="glycosylation site" description="N-linked (GlcNAc...) asparagine" evidence="7">
    <location>
        <position position="286"/>
    </location>
</feature>
<feature type="glycosylation site" description="N-linked (GlcNAc...) asparagine" evidence="3">
    <location>
        <position position="338"/>
    </location>
</feature>
<feature type="glycosylation site" description="N-linked (GlcNAc...) asparagine" evidence="3">
    <location>
        <position position="402"/>
    </location>
</feature>
<feature type="glycosylation site" description="N-linked (GlcNAc...) asparagine" evidence="3">
    <location>
        <position position="547"/>
    </location>
</feature>
<feature type="disulfide bond" evidence="7">
    <location>
        <begin position="50"/>
        <end position="92"/>
    </location>
</feature>
<feature type="disulfide bond" description="Interchain" evidence="17 18">
    <location>
        <position position="121"/>
    </location>
</feature>
<feature type="disulfide bond" evidence="7">
    <location>
        <begin position="234"/>
        <end position="518"/>
    </location>
</feature>
<feature type="disulfide bond" evidence="7">
    <location>
        <begin position="355"/>
        <end position="362"/>
    </location>
</feature>
<feature type="disulfide bond" evidence="7">
    <location>
        <begin position="400"/>
        <end position="407"/>
    </location>
</feature>
<feature type="disulfide bond" evidence="7">
    <location>
        <begin position="500"/>
        <end position="519"/>
    </location>
</feature>
<feature type="disulfide bond" evidence="7">
    <location>
        <begin position="504"/>
        <end position="522"/>
    </location>
</feature>
<feature type="disulfide bond" evidence="7">
    <location>
        <begin position="525"/>
        <end position="537"/>
    </location>
</feature>
<feature type="disulfide bond" evidence="7">
    <location>
        <begin position="540"/>
        <end position="553"/>
    </location>
</feature>
<feature type="disulfide bond" evidence="7">
    <location>
        <begin position="632"/>
        <end position="721"/>
    </location>
</feature>
<feature type="mutagenesis site" description="Impairs interaction with HTR2A." evidence="6">
    <original>A</original>
    <variation>S</variation>
    <location>
        <position position="677"/>
    </location>
</feature>
<feature type="mutagenesis site" description="Impairs interaction with HTR2A." evidence="6">
    <original>A</original>
    <variation>F</variation>
    <location>
        <position position="681"/>
    </location>
</feature>
<feature type="mutagenesis site" description="Impairs interaction with HTR2A." evidence="6">
    <original>A</original>
    <variation>G</variation>
    <location>
        <position position="685"/>
    </location>
</feature>
<feature type="sequence conflict" description="In Ref. 1; AAA76855." evidence="13" ref="1">
    <original>L</original>
    <variation>P</variation>
    <location>
        <position position="12"/>
    </location>
</feature>
<feature type="sequence conflict" description="In Ref. 1; AAA76855." evidence="13" ref="1">
    <original>V</original>
    <variation>E</variation>
    <location>
        <position position="210"/>
    </location>
</feature>
<feature type="sequence conflict" description="In Ref. 1; AAA76855." evidence="13" ref="1">
    <original>P</original>
    <variation>A</variation>
    <location>
        <position position="496"/>
    </location>
</feature>
<feature type="sequence conflict" description="In Ref. 1; AAA76855." evidence="13" ref="1">
    <original>K</original>
    <variation>N</variation>
    <location>
        <position position="748"/>
    </location>
</feature>
<feature type="sequence conflict" description="In Ref. 1; AAA76855." evidence="13" ref="1">
    <original>F</original>
    <variation>L</variation>
    <location>
        <position position="776"/>
    </location>
</feature>
<feature type="strand" evidence="19">
    <location>
        <begin position="26"/>
        <end position="28"/>
    </location>
</feature>
<feature type="strand" evidence="19">
    <location>
        <begin position="31"/>
        <end position="38"/>
    </location>
</feature>
<feature type="strand" evidence="19">
    <location>
        <begin position="41"/>
        <end position="43"/>
    </location>
</feature>
<feature type="helix" evidence="28">
    <location>
        <begin position="45"/>
        <end position="47"/>
    </location>
</feature>
<feature type="strand" evidence="19">
    <location>
        <begin position="49"/>
        <end position="53"/>
    </location>
</feature>
<feature type="turn" evidence="19">
    <location>
        <begin position="55"/>
        <end position="58"/>
    </location>
</feature>
<feature type="helix" evidence="19">
    <location>
        <begin position="59"/>
        <end position="74"/>
    </location>
</feature>
<feature type="strand" evidence="20">
    <location>
        <begin position="76"/>
        <end position="81"/>
    </location>
</feature>
<feature type="strand" evidence="19">
    <location>
        <begin position="84"/>
        <end position="90"/>
    </location>
</feature>
<feature type="helix" evidence="19">
    <location>
        <begin position="95"/>
        <end position="106"/>
    </location>
</feature>
<feature type="turn" evidence="19">
    <location>
        <begin position="107"/>
        <end position="109"/>
    </location>
</feature>
<feature type="strand" evidence="24">
    <location>
        <begin position="120"/>
        <end position="122"/>
    </location>
</feature>
<feature type="strand" evidence="19">
    <location>
        <begin position="138"/>
        <end position="140"/>
    </location>
</feature>
<feature type="helix" evidence="19">
    <location>
        <begin position="145"/>
        <end position="155"/>
    </location>
</feature>
<feature type="helix" evidence="19">
    <location>
        <begin position="156"/>
        <end position="158"/>
    </location>
</feature>
<feature type="strand" evidence="19">
    <location>
        <begin position="162"/>
        <end position="166"/>
    </location>
</feature>
<feature type="helix" evidence="19">
    <location>
        <begin position="170"/>
        <end position="173"/>
    </location>
</feature>
<feature type="turn" evidence="19">
    <location>
        <begin position="175"/>
        <end position="177"/>
    </location>
</feature>
<feature type="strand" evidence="19">
    <location>
        <begin position="181"/>
        <end position="185"/>
    </location>
</feature>
<feature type="helix" evidence="19">
    <location>
        <begin position="188"/>
        <end position="202"/>
    </location>
</feature>
<feature type="strand" evidence="19">
    <location>
        <begin position="206"/>
        <end position="214"/>
    </location>
</feature>
<feature type="helix" evidence="19">
    <location>
        <begin position="217"/>
        <end position="230"/>
    </location>
</feature>
<feature type="strand" evidence="19">
    <location>
        <begin position="234"/>
        <end position="241"/>
    </location>
</feature>
<feature type="helix" evidence="19">
    <location>
        <begin position="247"/>
        <end position="258"/>
    </location>
</feature>
<feature type="strand" evidence="21">
    <location>
        <begin position="260"/>
        <end position="262"/>
    </location>
</feature>
<feature type="strand" evidence="19">
    <location>
        <begin position="265"/>
        <end position="269"/>
    </location>
</feature>
<feature type="helix" evidence="19">
    <location>
        <begin position="272"/>
        <end position="284"/>
    </location>
</feature>
<feature type="strand" evidence="19">
    <location>
        <begin position="290"/>
        <end position="293"/>
    </location>
</feature>
<feature type="turn" evidence="19">
    <location>
        <begin position="295"/>
        <end position="299"/>
    </location>
</feature>
<feature type="helix" evidence="19">
    <location>
        <begin position="301"/>
        <end position="304"/>
    </location>
</feature>
<feature type="helix" evidence="19">
    <location>
        <begin position="308"/>
        <end position="311"/>
    </location>
</feature>
<feature type="strand" evidence="19">
    <location>
        <begin position="315"/>
        <end position="320"/>
    </location>
</feature>
<feature type="helix" evidence="19">
    <location>
        <begin position="327"/>
        <end position="332"/>
    </location>
</feature>
<feature type="turn" evidence="19">
    <location>
        <begin position="336"/>
        <end position="338"/>
    </location>
</feature>
<feature type="helix" evidence="19">
    <location>
        <begin position="345"/>
        <end position="352"/>
    </location>
</feature>
<feature type="strand" evidence="19">
    <location>
        <begin position="357"/>
        <end position="359"/>
    </location>
</feature>
<feature type="turn" evidence="23">
    <location>
        <begin position="361"/>
        <end position="364"/>
    </location>
</feature>
<feature type="turn" evidence="19">
    <location>
        <begin position="367"/>
        <end position="369"/>
    </location>
</feature>
<feature type="helix" evidence="19">
    <location>
        <begin position="378"/>
        <end position="399"/>
    </location>
</feature>
<feature type="strand" evidence="28">
    <location>
        <begin position="403"/>
        <end position="405"/>
    </location>
</feature>
<feature type="helix" evidence="19">
    <location>
        <begin position="408"/>
        <end position="410"/>
    </location>
</feature>
<feature type="helix" evidence="19">
    <location>
        <begin position="415"/>
        <end position="421"/>
    </location>
</feature>
<feature type="helix" evidence="19">
    <location>
        <begin position="423"/>
        <end position="425"/>
    </location>
</feature>
<feature type="strand" evidence="20">
    <location>
        <begin position="427"/>
        <end position="429"/>
    </location>
</feature>
<feature type="strand" evidence="32">
    <location>
        <begin position="434"/>
        <end position="436"/>
    </location>
</feature>
<feature type="strand" evidence="20">
    <location>
        <begin position="440"/>
        <end position="442"/>
    </location>
</feature>
<feature type="strand" evidence="30">
    <location>
        <begin position="447"/>
        <end position="449"/>
    </location>
</feature>
<feature type="strand" evidence="19">
    <location>
        <begin position="453"/>
        <end position="460"/>
    </location>
</feature>
<feature type="turn" evidence="32">
    <location>
        <begin position="461"/>
        <end position="464"/>
    </location>
</feature>
<feature type="strand" evidence="19">
    <location>
        <begin position="466"/>
        <end position="480"/>
    </location>
</feature>
<feature type="helix" evidence="19">
    <location>
        <begin position="482"/>
        <end position="484"/>
    </location>
</feature>
<feature type="turn" evidence="22">
    <location>
        <begin position="486"/>
        <end position="490"/>
    </location>
</feature>
<feature type="strand" evidence="28">
    <location>
        <begin position="499"/>
        <end position="502"/>
    </location>
</feature>
<feature type="strand" evidence="22">
    <location>
        <begin position="508"/>
        <end position="511"/>
    </location>
</feature>
<feature type="strand" evidence="31">
    <location>
        <begin position="514"/>
        <end position="516"/>
    </location>
</feature>
<feature type="helix" evidence="30">
    <location>
        <begin position="517"/>
        <end position="519"/>
    </location>
</feature>
<feature type="strand" evidence="22">
    <location>
        <begin position="521"/>
        <end position="524"/>
    </location>
</feature>
<feature type="strand" evidence="22">
    <location>
        <begin position="529"/>
        <end position="533"/>
    </location>
</feature>
<feature type="strand" evidence="22">
    <location>
        <begin position="536"/>
        <end position="539"/>
    </location>
</feature>
<feature type="strand" evidence="27">
    <location>
        <begin position="542"/>
        <end position="544"/>
    </location>
</feature>
<feature type="turn" evidence="23">
    <location>
        <begin position="548"/>
        <end position="550"/>
    </location>
</feature>
<feature type="strand" evidence="25">
    <location>
        <begin position="553"/>
        <end position="555"/>
    </location>
</feature>
<feature type="strand" evidence="27">
    <location>
        <begin position="559"/>
        <end position="561"/>
    </location>
</feature>
<feature type="strand" evidence="27">
    <location>
        <begin position="564"/>
        <end position="567"/>
    </location>
</feature>
<feature type="helix" evidence="27">
    <location>
        <begin position="569"/>
        <end position="588"/>
    </location>
</feature>
<feature type="turn" evidence="27">
    <location>
        <begin position="592"/>
        <end position="594"/>
    </location>
</feature>
<feature type="helix" evidence="27">
    <location>
        <begin position="596"/>
        <end position="600"/>
    </location>
</feature>
<feature type="helix" evidence="27">
    <location>
        <begin position="603"/>
        <end position="624"/>
    </location>
</feature>
<feature type="strand" evidence="24">
    <location>
        <begin position="628"/>
        <end position="630"/>
    </location>
</feature>
<feature type="helix" evidence="27">
    <location>
        <begin position="631"/>
        <end position="658"/>
    </location>
</feature>
<feature type="helix" evidence="26">
    <location>
        <begin position="663"/>
        <end position="665"/>
    </location>
</feature>
<feature type="helix" evidence="27">
    <location>
        <begin position="676"/>
        <end position="698"/>
    </location>
</feature>
<feature type="strand" evidence="26">
    <location>
        <begin position="705"/>
        <end position="708"/>
    </location>
</feature>
<feature type="turn" evidence="27">
    <location>
        <begin position="711"/>
        <end position="713"/>
    </location>
</feature>
<feature type="strand" evidence="29">
    <location>
        <begin position="718"/>
        <end position="721"/>
    </location>
</feature>
<feature type="helix" evidence="27">
    <location>
        <begin position="726"/>
        <end position="748"/>
    </location>
</feature>
<feature type="turn" evidence="26">
    <location>
        <begin position="749"/>
        <end position="751"/>
    </location>
</feature>
<feature type="strand" evidence="27">
    <location>
        <begin position="753"/>
        <end position="755"/>
    </location>
</feature>
<feature type="helix" evidence="27">
    <location>
        <begin position="756"/>
        <end position="783"/>
    </location>
</feature>
<feature type="helix" evidence="27">
    <location>
        <begin position="787"/>
        <end position="806"/>
    </location>
</feature>
<feature type="helix" evidence="27">
    <location>
        <begin position="810"/>
        <end position="818"/>
    </location>
</feature>
<feature type="helix" evidence="26">
    <location>
        <begin position="821"/>
        <end position="823"/>
    </location>
</feature>
<sequence length="872" mass="95568">MGSLLALLALLLLWGAVAEGPAKKVLTLEGDLVLGGLFPVHQKGGPAEDCGPVNEHRGIQRLEAMLFALDRINRDPHLLPGVRLGAHILDSCSKDTHALEQALDFVRASLSRGADGSRHICPDGSYATHGDAPTAITGVIGGSYSDVSIQVANLLRLFQIPQISYASTSAKLSDKSRYDYFARTVPPDFFQAKAMAEILRFFNWTYVSTVASEGDYGETGIEAFELEARARNICVATSEKVGRAMSRAAFEGVVRALLQKPSARVAVLFTRSEDARELLAASQRLNASFTWVASDGWGALESVVAGSEGAAEGAITIELASYPISDFASYFQSLDPWNNSRNPWFREFWEQRFRCSFRQRDCAAHSLRAVPFEQESKIMFVVNAVYAMAHALHNMHRALCPNTTRLCDAMRPVNGRRLYKDFVLNVKFDAPFRPADTHNEVRFDRFGDGIGRYNIFTYLRAGSGRYRYQKVGYWAEGLTLDTSLIPWASPSAGPLPASRCSEPCLQNEVKSVQPGEVCCWLCIPCQPYEYRLDEFTCADCGLGYWPNASLTGCFELPQEYIRWGDAWAVGPVTIACLGALATLFVLGVFVRHNATPVVKASGRELCYILLGGVFLCYCMTFIFIAKPSTAVCTLRRLGLGTAFSVCYSALLTKTNRIARIFGGAREGAQRPRFISPASQVAICLALISGQLLIVVAWLVVEAPGTGKETAPERREVVTLRCNHRDASMLGSLAYNVLLIALCTLYAFKTRKCPENFNEAKFIGFTMYTTCIIWLAFLPIFYVTSSDYRVQTTTMCVSVSLSGSVVLGCLFAPKLHIILFQPQKNVVSHRAPTSRFGSAAARASSSLGQGSGSQFVPTVCNGREVVDSTTSSL</sequence>